<organism>
    <name type="scientific">Variola virus (isolate Human/India/Ind3/1967)</name>
    <name type="common">VARV</name>
    <name type="synonym">Smallpox virus</name>
    <dbReference type="NCBI Taxonomy" id="587200"/>
    <lineage>
        <taxon>Viruses</taxon>
        <taxon>Varidnaviria</taxon>
        <taxon>Bamfordvirae</taxon>
        <taxon>Nucleocytoviricota</taxon>
        <taxon>Pokkesviricetes</taxon>
        <taxon>Chitovirales</taxon>
        <taxon>Poxviridae</taxon>
        <taxon>Chordopoxvirinae</taxon>
        <taxon>Orthopoxvirus</taxon>
        <taxon>Variola virus</taxon>
    </lineage>
</organism>
<proteinExistence type="inferred from homology"/>
<reference key="1">
    <citation type="journal article" date="1991" name="Dokl. Akad. Nauk SSSR">
        <title>Creation of a clone library of fragments from the natural variola virus and study of the structural and functional organization of viral genes from a circle of hosts.</title>
        <authorList>
            <person name="Shchelkunov S.N."/>
            <person name="Marennikova S.S."/>
            <person name="Totmenin A.V."/>
            <person name="Blinov V.M."/>
            <person name="Chizhikov V.E."/>
            <person name="Gutorov V.V."/>
            <person name="Safronov P.F."/>
            <person name="Pozdnyakov S.G."/>
            <person name="Shelukhina E.M."/>
            <person name="Gashnikov P.V."/>
            <person name="Anjaparidze O.G."/>
            <person name="Sandakhchiev L.S."/>
        </authorList>
    </citation>
    <scope>NUCLEOTIDE SEQUENCE [GENOMIC DNA]</scope>
    <source>
        <strain>India-1967 / Isolate Ind3</strain>
    </source>
</reference>
<reference key="2">
    <citation type="journal article" date="1993" name="FEBS Lett.">
        <title>Genes of variola and vaccinia viruses necessary to overcome the host protective mechanisms.</title>
        <authorList>
            <person name="Shchelkunov S.N."/>
            <person name="Blinov V.M."/>
            <person name="Sandakhchiev L.S."/>
        </authorList>
    </citation>
    <scope>NUCLEOTIDE SEQUENCE [GENOMIC DNA]</scope>
    <source>
        <strain>India-1967 / Isolate Ind3</strain>
    </source>
</reference>
<name>PG001_VAR67</name>
<evidence type="ECO:0000250" key="1"/>
<evidence type="ECO:0000250" key="2">
    <source>
        <dbReference type="UniProtKB" id="Q805H7"/>
    </source>
</evidence>
<evidence type="ECO:0000255" key="3"/>
<evidence type="ECO:0000256" key="4">
    <source>
        <dbReference type="SAM" id="MobiDB-lite"/>
    </source>
</evidence>
<evidence type="ECO:0000305" key="5"/>
<gene>
    <name type="primary">OPG001</name>
    <name type="synonym">B29R</name>
    <name type="synonym">C23L</name>
</gene>
<comment type="function">
    <text evidence="1">Inhibits host immune defense by binding to host chemokines. Binds host CC chemokines (beta chemokines) such as RANTES with high affinity, but not CXC or C chemokines (alpha and gamma chemokines) (By similarity).</text>
</comment>
<comment type="subunit">
    <text evidence="1">Binds to host CC chemokines, such as RANTES/CCL5, MIP-1alpha/CCL3, MCP-1/CCL2 and eotaxin.</text>
</comment>
<comment type="subcellular location">
    <subcellularLocation>
        <location evidence="1">Secreted</location>
    </subcellularLocation>
</comment>
<comment type="induction">
    <text evidence="2">Expressed in the early phase of the viral replicative cycle.</text>
</comment>
<comment type="similarity">
    <text evidence="5">Belongs to the orthopoxvirus OPG001 family.</text>
</comment>
<feature type="signal peptide" evidence="3">
    <location>
        <begin position="1"/>
        <end position="17"/>
    </location>
</feature>
<feature type="chain" id="PRO_0000040613" description="Chemokine-binding protein">
    <location>
        <begin position="18"/>
        <end position="253"/>
    </location>
</feature>
<feature type="region of interest" description="Disordered" evidence="4">
    <location>
        <begin position="62"/>
        <end position="87"/>
    </location>
</feature>
<feature type="compositionally biased region" description="Acidic residues" evidence="4">
    <location>
        <begin position="65"/>
        <end position="86"/>
    </location>
</feature>
<dbReference type="EMBL" id="X69198">
    <property type="protein sequence ID" value="CAA49138.1"/>
    <property type="molecule type" value="Genomic_DNA"/>
</dbReference>
<dbReference type="EMBL" id="X67117">
    <property type="protein sequence ID" value="CAA47541.1"/>
    <property type="molecule type" value="Genomic_DNA"/>
</dbReference>
<dbReference type="PIR" id="S46889">
    <property type="entry name" value="S46889"/>
</dbReference>
<dbReference type="SMR" id="P34016"/>
<dbReference type="KEGG" id="vg:1486428"/>
<dbReference type="Proteomes" id="UP000002060">
    <property type="component" value="Segment"/>
</dbReference>
<dbReference type="GO" id="GO:0005576">
    <property type="term" value="C:extracellular region"/>
    <property type="evidence" value="ECO:0007669"/>
    <property type="project" value="UniProtKB-SubCell"/>
</dbReference>
<dbReference type="Gene3D" id="2.60.240.10">
    <property type="entry name" value="Major secreted virus protein"/>
    <property type="match status" value="1"/>
</dbReference>
<dbReference type="InterPro" id="IPR009173">
    <property type="entry name" value="Chemkine-bd_vir"/>
</dbReference>
<dbReference type="InterPro" id="IPR003184">
    <property type="entry name" value="Orthopox_35kDa"/>
</dbReference>
<dbReference type="InterPro" id="IPR036540">
    <property type="entry name" value="Pox_vCCI-like_sf"/>
</dbReference>
<dbReference type="Pfam" id="PF02250">
    <property type="entry name" value="Orthopox_35kD"/>
    <property type="match status" value="1"/>
</dbReference>
<dbReference type="PIRSF" id="PIRSF003696">
    <property type="entry name" value="VAC_C23L"/>
    <property type="match status" value="1"/>
</dbReference>
<dbReference type="SUPFAM" id="SSF49889">
    <property type="entry name" value="Soluble secreted chemokine inhibitor, VCCI"/>
    <property type="match status" value="1"/>
</dbReference>
<protein>
    <recommendedName>
        <fullName>Chemokine-binding protein</fullName>
        <shortName>vCKBP</shortName>
    </recommendedName>
    <alternativeName>
        <fullName>35 kDa protein</fullName>
    </alternativeName>
</protein>
<keyword id="KW-0244">Early protein</keyword>
<keyword id="KW-0945">Host-virus interaction</keyword>
<keyword id="KW-1086">Inhibition of host chemokines by virus</keyword>
<keyword id="KW-1185">Reference proteome</keyword>
<keyword id="KW-0964">Secreted</keyword>
<keyword id="KW-0732">Signal</keyword>
<keyword id="KW-0899">Viral immunoevasion</keyword>
<sequence length="253" mass="27465">MKQYIVLACMCLAAAAMPASLQQSSSSCTEEENKHYMGIDVIIKVTKQDQTPTNDKICQSVTEITESESDPEVESEDDSTSVEDVDPPTTYYSIIGGGLRMNFGFTKCPQIKSISESANGNAVNARLSSVPLGQGKDSPAITRAEALAMIKDCELSIDIRCSEEEKDSDIQTHPVLESNISHKKVSYEDIIGSTIVDTKCVKNLEFSVRIGDMCKESSDLEVKDGFKYVDGSVSEGVTDDTSLIDSTKLKSCV</sequence>
<organismHost>
    <name type="scientific">Homo sapiens</name>
    <name type="common">Human</name>
    <dbReference type="NCBI Taxonomy" id="9606"/>
</organismHost>
<accession>P34016</accession>